<proteinExistence type="inferred from homology"/>
<sequence length="68" mass="7575">MKLHNRVTVKTDGGPRREGTILAVEEFSEGVMYLVSLDDYPTGIWFFNELSSPDGIFVEPVVGETQAK</sequence>
<dbReference type="EMBL" id="AP008232">
    <property type="protein sequence ID" value="BAE74513.1"/>
    <property type="molecule type" value="Genomic_DNA"/>
</dbReference>
<dbReference type="RefSeq" id="WP_011411067.1">
    <property type="nucleotide sequence ID" value="NC_007712.1"/>
</dbReference>
<dbReference type="SMR" id="Q2NTL2"/>
<dbReference type="KEGG" id="sgl:SG1238"/>
<dbReference type="eggNOG" id="ENOG5032ZW5">
    <property type="taxonomic scope" value="Bacteria"/>
</dbReference>
<dbReference type="HOGENOM" id="CLU_189289_0_0_6"/>
<dbReference type="OrthoDB" id="6548256at2"/>
<dbReference type="BioCyc" id="SGLO343509:SGP1_RS11065-MONOMER"/>
<dbReference type="Proteomes" id="UP000001932">
    <property type="component" value="Chromosome"/>
</dbReference>
<dbReference type="HAMAP" id="MF_01549">
    <property type="entry name" value="DsrB"/>
    <property type="match status" value="1"/>
</dbReference>
<dbReference type="InterPro" id="IPR019717">
    <property type="entry name" value="Dextransucrase_DSRB"/>
</dbReference>
<dbReference type="NCBIfam" id="NF007981">
    <property type="entry name" value="PRK10708.1"/>
    <property type="match status" value="1"/>
</dbReference>
<dbReference type="Pfam" id="PF10781">
    <property type="entry name" value="DSRB"/>
    <property type="match status" value="1"/>
</dbReference>
<evidence type="ECO:0000255" key="1">
    <source>
        <dbReference type="HAMAP-Rule" id="MF_01549"/>
    </source>
</evidence>
<reference key="1">
    <citation type="journal article" date="2006" name="Genome Res.">
        <title>Massive genome erosion and functional adaptations provide insights into the symbiotic lifestyle of Sodalis glossinidius in the tsetse host.</title>
        <authorList>
            <person name="Toh H."/>
            <person name="Weiss B.L."/>
            <person name="Perkin S.A.H."/>
            <person name="Yamashita A."/>
            <person name="Oshima K."/>
            <person name="Hattori M."/>
            <person name="Aksoy S."/>
        </authorList>
    </citation>
    <scope>NUCLEOTIDE SEQUENCE [LARGE SCALE GENOMIC DNA]</scope>
    <source>
        <strain>morsitans</strain>
    </source>
</reference>
<name>DSRB_SODGM</name>
<comment type="similarity">
    <text evidence="1">Belongs to the DsrB family.</text>
</comment>
<organism>
    <name type="scientific">Sodalis glossinidius (strain morsitans)</name>
    <dbReference type="NCBI Taxonomy" id="343509"/>
    <lineage>
        <taxon>Bacteria</taxon>
        <taxon>Pseudomonadati</taxon>
        <taxon>Pseudomonadota</taxon>
        <taxon>Gammaproteobacteria</taxon>
        <taxon>Enterobacterales</taxon>
        <taxon>Bruguierivoracaceae</taxon>
        <taxon>Sodalis</taxon>
    </lineage>
</organism>
<feature type="chain" id="PRO_0000300618" description="Protein DsrB">
    <location>
        <begin position="1"/>
        <end position="68"/>
    </location>
</feature>
<protein>
    <recommendedName>
        <fullName evidence="1">Protein DsrB</fullName>
    </recommendedName>
</protein>
<gene>
    <name evidence="1" type="primary">dsrB</name>
    <name type="ordered locus">SG1238</name>
</gene>
<accession>Q2NTL2</accession>